<gene>
    <name evidence="1" type="primary">era</name>
    <name type="ordered locus">HD_1605</name>
</gene>
<sequence length="304" mass="34739">MRMIEQAPKTYCGFIAIVGRPNVGKSTLLNKILGQKISITSRKAQTTRHRIVGIQTEEQYQAIYVDTPGLHIEEKRAINRLMNRAASSAIGDVDLIIFVVEGTKWTDDDEMVLNKLRTAKAPVVLAINKVDNIKEKDELLPHITALSQKFDFAEILPISAQRGKNVHILQKIVRKSLREGVHHFPEEYVTDRSQRFMASEIIREKLMRFTGEELPYSVTVEIEQFKLNERGTYEINGLILVEREGQKKMVIGAKGQKIKTIGIEARADMERLFDNKVHLELWVKVKAGWADDERALRSLGYMDE</sequence>
<proteinExistence type="inferred from homology"/>
<comment type="function">
    <text evidence="1">An essential GTPase that binds both GDP and GTP, with rapid nucleotide exchange. Plays a role in 16S rRNA processing and 30S ribosomal subunit biogenesis and possibly also in cell cycle regulation and energy metabolism.</text>
</comment>
<comment type="subunit">
    <text evidence="1">Monomer.</text>
</comment>
<comment type="subcellular location">
    <subcellularLocation>
        <location>Cytoplasm</location>
    </subcellularLocation>
    <subcellularLocation>
        <location evidence="1">Cell inner membrane</location>
        <topology evidence="1">Peripheral membrane protein</topology>
    </subcellularLocation>
</comment>
<comment type="similarity">
    <text evidence="1 2">Belongs to the TRAFAC class TrmE-Era-EngA-EngB-Septin-like GTPase superfamily. Era GTPase family.</text>
</comment>
<reference key="1">
    <citation type="submission" date="2003-06" db="EMBL/GenBank/DDBJ databases">
        <title>The complete genome sequence of Haemophilus ducreyi.</title>
        <authorList>
            <person name="Munson R.S. Jr."/>
            <person name="Ray W.C."/>
            <person name="Mahairas G."/>
            <person name="Sabo P."/>
            <person name="Mungur R."/>
            <person name="Johnson L."/>
            <person name="Nguyen D."/>
            <person name="Wang J."/>
            <person name="Forst C."/>
            <person name="Hood L."/>
        </authorList>
    </citation>
    <scope>NUCLEOTIDE SEQUENCE [LARGE SCALE GENOMIC DNA]</scope>
    <source>
        <strain>35000HP / ATCC 700724</strain>
    </source>
</reference>
<name>ERA_HAEDU</name>
<evidence type="ECO:0000255" key="1">
    <source>
        <dbReference type="HAMAP-Rule" id="MF_00367"/>
    </source>
</evidence>
<evidence type="ECO:0000255" key="2">
    <source>
        <dbReference type="PROSITE-ProRule" id="PRU01050"/>
    </source>
</evidence>
<dbReference type="EMBL" id="AE017143">
    <property type="protein sequence ID" value="AAP96383.1"/>
    <property type="molecule type" value="Genomic_DNA"/>
</dbReference>
<dbReference type="SMR" id="Q7VL76"/>
<dbReference type="STRING" id="233412.HD_1605"/>
<dbReference type="KEGG" id="hdu:HD_1605"/>
<dbReference type="eggNOG" id="COG1159">
    <property type="taxonomic scope" value="Bacteria"/>
</dbReference>
<dbReference type="HOGENOM" id="CLU_038009_1_0_6"/>
<dbReference type="Proteomes" id="UP000001022">
    <property type="component" value="Chromosome"/>
</dbReference>
<dbReference type="GO" id="GO:0005829">
    <property type="term" value="C:cytosol"/>
    <property type="evidence" value="ECO:0007669"/>
    <property type="project" value="TreeGrafter"/>
</dbReference>
<dbReference type="GO" id="GO:0005886">
    <property type="term" value="C:plasma membrane"/>
    <property type="evidence" value="ECO:0007669"/>
    <property type="project" value="UniProtKB-SubCell"/>
</dbReference>
<dbReference type="GO" id="GO:0005525">
    <property type="term" value="F:GTP binding"/>
    <property type="evidence" value="ECO:0007669"/>
    <property type="project" value="UniProtKB-UniRule"/>
</dbReference>
<dbReference type="GO" id="GO:0003924">
    <property type="term" value="F:GTPase activity"/>
    <property type="evidence" value="ECO:0007669"/>
    <property type="project" value="UniProtKB-UniRule"/>
</dbReference>
<dbReference type="GO" id="GO:0043024">
    <property type="term" value="F:ribosomal small subunit binding"/>
    <property type="evidence" value="ECO:0007669"/>
    <property type="project" value="TreeGrafter"/>
</dbReference>
<dbReference type="GO" id="GO:0070181">
    <property type="term" value="F:small ribosomal subunit rRNA binding"/>
    <property type="evidence" value="ECO:0007669"/>
    <property type="project" value="UniProtKB-UniRule"/>
</dbReference>
<dbReference type="GO" id="GO:0000028">
    <property type="term" value="P:ribosomal small subunit assembly"/>
    <property type="evidence" value="ECO:0007669"/>
    <property type="project" value="TreeGrafter"/>
</dbReference>
<dbReference type="CDD" id="cd04163">
    <property type="entry name" value="Era"/>
    <property type="match status" value="1"/>
</dbReference>
<dbReference type="CDD" id="cd22534">
    <property type="entry name" value="KH-II_Era"/>
    <property type="match status" value="1"/>
</dbReference>
<dbReference type="FunFam" id="3.30.300.20:FF:000003">
    <property type="entry name" value="GTPase Era"/>
    <property type="match status" value="1"/>
</dbReference>
<dbReference type="FunFam" id="3.40.50.300:FF:000094">
    <property type="entry name" value="GTPase Era"/>
    <property type="match status" value="1"/>
</dbReference>
<dbReference type="Gene3D" id="3.30.300.20">
    <property type="match status" value="1"/>
</dbReference>
<dbReference type="Gene3D" id="3.40.50.300">
    <property type="entry name" value="P-loop containing nucleotide triphosphate hydrolases"/>
    <property type="match status" value="1"/>
</dbReference>
<dbReference type="HAMAP" id="MF_00367">
    <property type="entry name" value="GTPase_Era"/>
    <property type="match status" value="1"/>
</dbReference>
<dbReference type="InterPro" id="IPR030388">
    <property type="entry name" value="G_ERA_dom"/>
</dbReference>
<dbReference type="InterPro" id="IPR006073">
    <property type="entry name" value="GTP-bd"/>
</dbReference>
<dbReference type="InterPro" id="IPR005662">
    <property type="entry name" value="GTPase_Era-like"/>
</dbReference>
<dbReference type="InterPro" id="IPR015946">
    <property type="entry name" value="KH_dom-like_a/b"/>
</dbReference>
<dbReference type="InterPro" id="IPR004044">
    <property type="entry name" value="KH_dom_type_2"/>
</dbReference>
<dbReference type="InterPro" id="IPR009019">
    <property type="entry name" value="KH_sf_prok-type"/>
</dbReference>
<dbReference type="InterPro" id="IPR027417">
    <property type="entry name" value="P-loop_NTPase"/>
</dbReference>
<dbReference type="InterPro" id="IPR005225">
    <property type="entry name" value="Small_GTP-bd"/>
</dbReference>
<dbReference type="NCBIfam" id="TIGR00436">
    <property type="entry name" value="era"/>
    <property type="match status" value="1"/>
</dbReference>
<dbReference type="NCBIfam" id="NF000908">
    <property type="entry name" value="PRK00089.1"/>
    <property type="match status" value="1"/>
</dbReference>
<dbReference type="NCBIfam" id="TIGR00231">
    <property type="entry name" value="small_GTP"/>
    <property type="match status" value="1"/>
</dbReference>
<dbReference type="PANTHER" id="PTHR42698">
    <property type="entry name" value="GTPASE ERA"/>
    <property type="match status" value="1"/>
</dbReference>
<dbReference type="PANTHER" id="PTHR42698:SF1">
    <property type="entry name" value="GTPASE ERA, MITOCHONDRIAL"/>
    <property type="match status" value="1"/>
</dbReference>
<dbReference type="Pfam" id="PF07650">
    <property type="entry name" value="KH_2"/>
    <property type="match status" value="1"/>
</dbReference>
<dbReference type="Pfam" id="PF01926">
    <property type="entry name" value="MMR_HSR1"/>
    <property type="match status" value="1"/>
</dbReference>
<dbReference type="PRINTS" id="PR00326">
    <property type="entry name" value="GTP1OBG"/>
</dbReference>
<dbReference type="SUPFAM" id="SSF52540">
    <property type="entry name" value="P-loop containing nucleoside triphosphate hydrolases"/>
    <property type="match status" value="1"/>
</dbReference>
<dbReference type="SUPFAM" id="SSF54814">
    <property type="entry name" value="Prokaryotic type KH domain (KH-domain type II)"/>
    <property type="match status" value="1"/>
</dbReference>
<dbReference type="PROSITE" id="PS51713">
    <property type="entry name" value="G_ERA"/>
    <property type="match status" value="1"/>
</dbReference>
<dbReference type="PROSITE" id="PS50823">
    <property type="entry name" value="KH_TYPE_2"/>
    <property type="match status" value="1"/>
</dbReference>
<organism>
    <name type="scientific">Haemophilus ducreyi (strain 35000HP / ATCC 700724)</name>
    <dbReference type="NCBI Taxonomy" id="233412"/>
    <lineage>
        <taxon>Bacteria</taxon>
        <taxon>Pseudomonadati</taxon>
        <taxon>Pseudomonadota</taxon>
        <taxon>Gammaproteobacteria</taxon>
        <taxon>Pasteurellales</taxon>
        <taxon>Pasteurellaceae</taxon>
        <taxon>Haemophilus</taxon>
    </lineage>
</organism>
<accession>Q7VL76</accession>
<protein>
    <recommendedName>
        <fullName evidence="1">GTPase Era</fullName>
    </recommendedName>
</protein>
<feature type="chain" id="PRO_0000180016" description="GTPase Era">
    <location>
        <begin position="1"/>
        <end position="304"/>
    </location>
</feature>
<feature type="domain" description="Era-type G" evidence="2">
    <location>
        <begin position="11"/>
        <end position="179"/>
    </location>
</feature>
<feature type="domain" description="KH type-2" evidence="1">
    <location>
        <begin position="210"/>
        <end position="287"/>
    </location>
</feature>
<feature type="region of interest" description="G1" evidence="2">
    <location>
        <begin position="19"/>
        <end position="26"/>
    </location>
</feature>
<feature type="region of interest" description="G2" evidence="2">
    <location>
        <begin position="45"/>
        <end position="49"/>
    </location>
</feature>
<feature type="region of interest" description="G3" evidence="2">
    <location>
        <begin position="66"/>
        <end position="69"/>
    </location>
</feature>
<feature type="region of interest" description="G4" evidence="2">
    <location>
        <begin position="128"/>
        <end position="131"/>
    </location>
</feature>
<feature type="region of interest" description="G5" evidence="2">
    <location>
        <begin position="158"/>
        <end position="160"/>
    </location>
</feature>
<feature type="binding site" evidence="1">
    <location>
        <begin position="19"/>
        <end position="26"/>
    </location>
    <ligand>
        <name>GTP</name>
        <dbReference type="ChEBI" id="CHEBI:37565"/>
    </ligand>
</feature>
<feature type="binding site" evidence="1">
    <location>
        <begin position="66"/>
        <end position="70"/>
    </location>
    <ligand>
        <name>GTP</name>
        <dbReference type="ChEBI" id="CHEBI:37565"/>
    </ligand>
</feature>
<feature type="binding site" evidence="1">
    <location>
        <begin position="128"/>
        <end position="131"/>
    </location>
    <ligand>
        <name>GTP</name>
        <dbReference type="ChEBI" id="CHEBI:37565"/>
    </ligand>
</feature>
<keyword id="KW-0997">Cell inner membrane</keyword>
<keyword id="KW-1003">Cell membrane</keyword>
<keyword id="KW-0963">Cytoplasm</keyword>
<keyword id="KW-0342">GTP-binding</keyword>
<keyword id="KW-0472">Membrane</keyword>
<keyword id="KW-0547">Nucleotide-binding</keyword>
<keyword id="KW-1185">Reference proteome</keyword>
<keyword id="KW-0690">Ribosome biogenesis</keyword>
<keyword id="KW-0694">RNA-binding</keyword>
<keyword id="KW-0699">rRNA-binding</keyword>